<feature type="chain" id="PRO_0000096213" description="tRNA threonylcarbamoyladenosine biosynthesis protein TsaE">
    <location>
        <begin position="1"/>
        <end position="161"/>
    </location>
</feature>
<feature type="binding site" evidence="1">
    <location>
        <begin position="43"/>
        <end position="48"/>
    </location>
    <ligand>
        <name>ATP</name>
        <dbReference type="ChEBI" id="CHEBI:30616"/>
    </ligand>
</feature>
<feature type="binding site" evidence="1">
    <location>
        <position position="47"/>
    </location>
    <ligand>
        <name>Mg(2+)</name>
        <dbReference type="ChEBI" id="CHEBI:18420"/>
    </ligand>
</feature>
<feature type="binding site" evidence="1">
    <location>
        <position position="121"/>
    </location>
    <ligand>
        <name>Mg(2+)</name>
        <dbReference type="ChEBI" id="CHEBI:18420"/>
    </ligand>
</feature>
<name>TSAE_MYCLE</name>
<reference key="1">
    <citation type="submission" date="1994-03" db="EMBL/GenBank/DDBJ databases">
        <authorList>
            <person name="Smith D.R."/>
            <person name="Robison K."/>
        </authorList>
    </citation>
    <scope>NUCLEOTIDE SEQUENCE [GENOMIC DNA]</scope>
</reference>
<reference key="2">
    <citation type="journal article" date="2001" name="Nature">
        <title>Massive gene decay in the leprosy bacillus.</title>
        <authorList>
            <person name="Cole S.T."/>
            <person name="Eiglmeier K."/>
            <person name="Parkhill J."/>
            <person name="James K.D."/>
            <person name="Thomson N.R."/>
            <person name="Wheeler P.R."/>
            <person name="Honore N."/>
            <person name="Garnier T."/>
            <person name="Churcher C.M."/>
            <person name="Harris D.E."/>
            <person name="Mungall K.L."/>
            <person name="Basham D."/>
            <person name="Brown D."/>
            <person name="Chillingworth T."/>
            <person name="Connor R."/>
            <person name="Davies R.M."/>
            <person name="Devlin K."/>
            <person name="Duthoy S."/>
            <person name="Feltwell T."/>
            <person name="Fraser A."/>
            <person name="Hamlin N."/>
            <person name="Holroyd S."/>
            <person name="Hornsby T."/>
            <person name="Jagels K."/>
            <person name="Lacroix C."/>
            <person name="Maclean J."/>
            <person name="Moule S."/>
            <person name="Murphy L.D."/>
            <person name="Oliver K."/>
            <person name="Quail M.A."/>
            <person name="Rajandream M.A."/>
            <person name="Rutherford K.M."/>
            <person name="Rutter S."/>
            <person name="Seeger K."/>
            <person name="Simon S."/>
            <person name="Simmonds M."/>
            <person name="Skelton J."/>
            <person name="Squares R."/>
            <person name="Squares S."/>
            <person name="Stevens K."/>
            <person name="Taylor K."/>
            <person name="Whitehead S."/>
            <person name="Woodward J.R."/>
            <person name="Barrell B.G."/>
        </authorList>
    </citation>
    <scope>NUCLEOTIDE SEQUENCE [LARGE SCALE GENOMIC DNA]</scope>
    <source>
        <strain>TN</strain>
    </source>
</reference>
<dbReference type="EMBL" id="U00020">
    <property type="protein sequence ID" value="AAA17300.1"/>
    <property type="molecule type" value="Genomic_DNA"/>
</dbReference>
<dbReference type="EMBL" id="AL583918">
    <property type="protein sequence ID" value="CAC29885.1"/>
    <property type="molecule type" value="Genomic_DNA"/>
</dbReference>
<dbReference type="PIR" id="S72986">
    <property type="entry name" value="S72986"/>
</dbReference>
<dbReference type="RefSeq" id="NP_301369.1">
    <property type="nucleotide sequence ID" value="NC_002677.1"/>
</dbReference>
<dbReference type="RefSeq" id="WP_010907693.1">
    <property type="nucleotide sequence ID" value="NC_002677.1"/>
</dbReference>
<dbReference type="SMR" id="Q49864"/>
<dbReference type="STRING" id="272631.gene:17574196"/>
<dbReference type="KEGG" id="mle:ML0377"/>
<dbReference type="PATRIC" id="fig|272631.5.peg.639"/>
<dbReference type="Leproma" id="ML0377"/>
<dbReference type="eggNOG" id="COG0802">
    <property type="taxonomic scope" value="Bacteria"/>
</dbReference>
<dbReference type="HOGENOM" id="CLU_087829_1_1_11"/>
<dbReference type="OrthoDB" id="9800307at2"/>
<dbReference type="Proteomes" id="UP000000806">
    <property type="component" value="Chromosome"/>
</dbReference>
<dbReference type="GO" id="GO:0005737">
    <property type="term" value="C:cytoplasm"/>
    <property type="evidence" value="ECO:0007669"/>
    <property type="project" value="UniProtKB-SubCell"/>
</dbReference>
<dbReference type="GO" id="GO:0005524">
    <property type="term" value="F:ATP binding"/>
    <property type="evidence" value="ECO:0007669"/>
    <property type="project" value="UniProtKB-KW"/>
</dbReference>
<dbReference type="GO" id="GO:0046872">
    <property type="term" value="F:metal ion binding"/>
    <property type="evidence" value="ECO:0007669"/>
    <property type="project" value="UniProtKB-KW"/>
</dbReference>
<dbReference type="GO" id="GO:0002949">
    <property type="term" value="P:tRNA threonylcarbamoyladenosine modification"/>
    <property type="evidence" value="ECO:0007669"/>
    <property type="project" value="InterPro"/>
</dbReference>
<dbReference type="FunFam" id="3.40.50.300:FF:001732">
    <property type="entry name" value="tRNA threonylcarbamoyladenosine biosynthesis protein TsaE"/>
    <property type="match status" value="1"/>
</dbReference>
<dbReference type="Gene3D" id="3.40.50.300">
    <property type="entry name" value="P-loop containing nucleotide triphosphate hydrolases"/>
    <property type="match status" value="1"/>
</dbReference>
<dbReference type="InterPro" id="IPR027417">
    <property type="entry name" value="P-loop_NTPase"/>
</dbReference>
<dbReference type="InterPro" id="IPR003442">
    <property type="entry name" value="T6A_TsaE"/>
</dbReference>
<dbReference type="NCBIfam" id="TIGR00150">
    <property type="entry name" value="T6A_YjeE"/>
    <property type="match status" value="1"/>
</dbReference>
<dbReference type="PANTHER" id="PTHR33540">
    <property type="entry name" value="TRNA THREONYLCARBAMOYLADENOSINE BIOSYNTHESIS PROTEIN TSAE"/>
    <property type="match status" value="1"/>
</dbReference>
<dbReference type="PANTHER" id="PTHR33540:SF2">
    <property type="entry name" value="TRNA THREONYLCARBAMOYLADENOSINE BIOSYNTHESIS PROTEIN TSAE"/>
    <property type="match status" value="1"/>
</dbReference>
<dbReference type="Pfam" id="PF02367">
    <property type="entry name" value="TsaE"/>
    <property type="match status" value="1"/>
</dbReference>
<dbReference type="SUPFAM" id="SSF52540">
    <property type="entry name" value="P-loop containing nucleoside triphosphate hydrolases"/>
    <property type="match status" value="1"/>
</dbReference>
<proteinExistence type="inferred from homology"/>
<comment type="function">
    <text evidence="1">Required for the formation of a threonylcarbamoyl group on adenosine at position 37 (t(6)A37) in tRNAs that read codons beginning with adenine. Is involved in the transfer of the threonylcarbamoyl moiety of threonylcarbamoyl-AMP (TC-AMP) to the N6 group of A37, together with TsaD and TsaB. TsaE seems to play an indirect role in the t(6)A biosynthesis pathway, possibly in regulating the core enzymatic function of TsaD (By similarity).</text>
</comment>
<comment type="subcellular location">
    <subcellularLocation>
        <location evidence="1">Cytoplasm</location>
    </subcellularLocation>
</comment>
<comment type="similarity">
    <text evidence="2">Belongs to the TsaE family.</text>
</comment>
<gene>
    <name type="primary">tsaE</name>
    <name type="ordered locus">ML0377</name>
    <name type="ORF">B229_C2_205</name>
    <name type="ORF">u229f</name>
</gene>
<organism>
    <name type="scientific">Mycobacterium leprae (strain TN)</name>
    <dbReference type="NCBI Taxonomy" id="272631"/>
    <lineage>
        <taxon>Bacteria</taxon>
        <taxon>Bacillati</taxon>
        <taxon>Actinomycetota</taxon>
        <taxon>Actinomycetes</taxon>
        <taxon>Mycobacteriales</taxon>
        <taxon>Mycobacteriaceae</taxon>
        <taxon>Mycobacterium</taxon>
    </lineage>
</organism>
<sequence>MAEYSLRSGAVICERVEDTVALGSRLGEQLRAGDVVVLSGPLGAGKTVLAKGIAVAMDVDGPVISPTYVLARVHLPRRLGTPAMIHVDVYRLLDHRDADLVGELDSLDLDTDLAEAVVVMEWGAGLAECLAARHLDIRLERVRYSDVRIATWQWVCSRDRP</sequence>
<evidence type="ECO:0000250" key="1"/>
<evidence type="ECO:0000305" key="2"/>
<keyword id="KW-0067">ATP-binding</keyword>
<keyword id="KW-0963">Cytoplasm</keyword>
<keyword id="KW-0460">Magnesium</keyword>
<keyword id="KW-0479">Metal-binding</keyword>
<keyword id="KW-0547">Nucleotide-binding</keyword>
<keyword id="KW-1185">Reference proteome</keyword>
<keyword id="KW-0819">tRNA processing</keyword>
<protein>
    <recommendedName>
        <fullName>tRNA threonylcarbamoyladenosine biosynthesis protein TsaE</fullName>
    </recommendedName>
    <alternativeName>
        <fullName>t(6)A37 threonylcarbamoyladenosine biosynthesis protein TsaE</fullName>
    </alternativeName>
</protein>
<accession>Q49864</accession>